<evidence type="ECO:0000250" key="1">
    <source>
        <dbReference type="UniProtKB" id="P0C1Z0"/>
    </source>
</evidence>
<evidence type="ECO:0000250" key="2">
    <source>
        <dbReference type="UniProtKB" id="P60775"/>
    </source>
</evidence>
<evidence type="ECO:0000269" key="3">
    <source ref="1"/>
</evidence>
<evidence type="ECO:0000305" key="4"/>
<keyword id="KW-0008">Acetylcholine receptor inhibiting toxin</keyword>
<keyword id="KW-0903">Direct protein sequencing</keyword>
<keyword id="KW-1015">Disulfide bond</keyword>
<keyword id="KW-0872">Ion channel impairing toxin</keyword>
<keyword id="KW-0528">Neurotoxin</keyword>
<keyword id="KW-0629">Postsynaptic neurotoxin</keyword>
<keyword id="KW-0964">Secreted</keyword>
<keyword id="KW-0800">Toxin</keyword>
<organism>
    <name type="scientific">Hydrophis torquatus</name>
    <name type="common">West Coast black-headed sea snake</name>
    <name type="synonym">Chitulia torquata</name>
    <dbReference type="NCBI Taxonomy" id="747462"/>
    <lineage>
        <taxon>Eukaryota</taxon>
        <taxon>Metazoa</taxon>
        <taxon>Chordata</taxon>
        <taxon>Craniata</taxon>
        <taxon>Vertebrata</taxon>
        <taxon>Euteleostomi</taxon>
        <taxon>Lepidosauria</taxon>
        <taxon>Squamata</taxon>
        <taxon>Bifurcata</taxon>
        <taxon>Unidentata</taxon>
        <taxon>Episquamata</taxon>
        <taxon>Toxicofera</taxon>
        <taxon>Serpentes</taxon>
        <taxon>Colubroidea</taxon>
        <taxon>Elapidae</taxon>
        <taxon>Hydrophiinae</taxon>
        <taxon>Hydrophis</taxon>
    </lineage>
</organism>
<sequence>MTCCNQQSSQPKTTTNCAGNSCYKKTWSDHRGTIIERGCGCPQVKSGIKLECCHTNECNN</sequence>
<accession>P0CG02</accession>
<protein>
    <recommendedName>
        <fullName>Toxin aagardi</fullName>
    </recommendedName>
</protein>
<feature type="chain" id="PRO_0000394533" description="Toxin aagardi" evidence="3">
    <location>
        <begin position="1"/>
        <end position="60"/>
    </location>
</feature>
<feature type="disulfide bond" evidence="1">
    <location>
        <begin position="3"/>
        <end position="22"/>
    </location>
</feature>
<feature type="disulfide bond" evidence="1">
    <location>
        <begin position="17"/>
        <end position="39"/>
    </location>
</feature>
<feature type="disulfide bond" evidence="1">
    <location>
        <begin position="41"/>
        <end position="52"/>
    </location>
</feature>
<feature type="disulfide bond" evidence="1">
    <location>
        <begin position="53"/>
        <end position="58"/>
    </location>
</feature>
<dbReference type="SMR" id="P0CG02"/>
<dbReference type="GO" id="GO:0005576">
    <property type="term" value="C:extracellular region"/>
    <property type="evidence" value="ECO:0007669"/>
    <property type="project" value="UniProtKB-SubCell"/>
</dbReference>
<dbReference type="GO" id="GO:0030550">
    <property type="term" value="F:acetylcholine receptor inhibitor activity"/>
    <property type="evidence" value="ECO:0007669"/>
    <property type="project" value="UniProtKB-KW"/>
</dbReference>
<dbReference type="GO" id="GO:0099106">
    <property type="term" value="F:ion channel regulator activity"/>
    <property type="evidence" value="ECO:0007669"/>
    <property type="project" value="UniProtKB-KW"/>
</dbReference>
<dbReference type="GO" id="GO:0090729">
    <property type="term" value="F:toxin activity"/>
    <property type="evidence" value="ECO:0007669"/>
    <property type="project" value="UniProtKB-KW"/>
</dbReference>
<dbReference type="CDD" id="cd00206">
    <property type="entry name" value="TFP_snake_toxin"/>
    <property type="match status" value="1"/>
</dbReference>
<dbReference type="Gene3D" id="2.10.60.10">
    <property type="entry name" value="CD59"/>
    <property type="match status" value="1"/>
</dbReference>
<dbReference type="InterPro" id="IPR003571">
    <property type="entry name" value="Snake_3FTx"/>
</dbReference>
<dbReference type="InterPro" id="IPR045860">
    <property type="entry name" value="Snake_toxin-like_sf"/>
</dbReference>
<dbReference type="InterPro" id="IPR018354">
    <property type="entry name" value="Snake_toxin_con_site"/>
</dbReference>
<dbReference type="InterPro" id="IPR054131">
    <property type="entry name" value="Toxin_cobra-type"/>
</dbReference>
<dbReference type="Pfam" id="PF21947">
    <property type="entry name" value="Toxin_cobra-type"/>
    <property type="match status" value="1"/>
</dbReference>
<dbReference type="SUPFAM" id="SSF57302">
    <property type="entry name" value="Snake toxin-like"/>
    <property type="match status" value="1"/>
</dbReference>
<dbReference type="PROSITE" id="PS00272">
    <property type="entry name" value="SNAKE_TOXIN"/>
    <property type="match status" value="1"/>
</dbReference>
<reference key="1">
    <citation type="journal article" date="2009" name="Toxins">
        <title>Isolation and chemical characterization of a toxin isolated from the venom of the sea snake, Hydrophis torquatus aagardi.</title>
        <authorList>
            <person name="Nagamizu M."/>
            <person name="Komori Y."/>
            <person name="Uchiya K.-I."/>
            <person name="Nikai T."/>
            <person name="Tu A.T."/>
        </authorList>
    </citation>
    <scope>PROTEIN SEQUENCE</scope>
    <scope>SUBCELLULAR LOCATION</scope>
    <scope>MASS SPECTROMETRY</scope>
    <scope>TOXIC DOSE</scope>
    <source>
        <strain>Subsp. aagaardi</strain>
        <tissue>Venom</tissue>
    </source>
</reference>
<proteinExistence type="evidence at protein level"/>
<name>3S1A_HYDTO</name>
<comment type="function">
    <text evidence="2">Binds to muscle nicotinic acetylcholine receptor (nAChR) and inhibit acetylcholine from binding to the receptor, thereby impairing neuromuscular transmission.</text>
</comment>
<comment type="subcellular location">
    <subcellularLocation>
        <location evidence="3">Secreted</location>
    </subcellularLocation>
</comment>
<comment type="tissue specificity">
    <text evidence="4">Expressed by the venom gland.</text>
</comment>
<comment type="mass spectrometry"/>
<comment type="toxic dose">
    <text evidence="3">LD(50) is 36 ng/kg by intravenous injection into mice.</text>
</comment>
<comment type="similarity">
    <text evidence="4">Belongs to the three-finger toxin family. Short-chain subfamily. Type I alpha-neurotoxin sub-subfamily.</text>
</comment>